<dbReference type="EC" id="6.3.5.-" evidence="1"/>
<dbReference type="EMBL" id="CP001043">
    <property type="protein sequence ID" value="ACC69250.1"/>
    <property type="molecule type" value="Genomic_DNA"/>
</dbReference>
<dbReference type="RefSeq" id="WP_012399480.1">
    <property type="nucleotide sequence ID" value="NC_010622.1"/>
</dbReference>
<dbReference type="SMR" id="B2JJW3"/>
<dbReference type="STRING" id="391038.Bphy_0055"/>
<dbReference type="KEGG" id="bph:Bphy_0055"/>
<dbReference type="eggNOG" id="COG0064">
    <property type="taxonomic scope" value="Bacteria"/>
</dbReference>
<dbReference type="HOGENOM" id="CLU_019240_0_0_4"/>
<dbReference type="OrthoDB" id="9804078at2"/>
<dbReference type="Proteomes" id="UP000001192">
    <property type="component" value="Chromosome 1"/>
</dbReference>
<dbReference type="GO" id="GO:0050566">
    <property type="term" value="F:asparaginyl-tRNA synthase (glutamine-hydrolyzing) activity"/>
    <property type="evidence" value="ECO:0007669"/>
    <property type="project" value="RHEA"/>
</dbReference>
<dbReference type="GO" id="GO:0005524">
    <property type="term" value="F:ATP binding"/>
    <property type="evidence" value="ECO:0007669"/>
    <property type="project" value="UniProtKB-KW"/>
</dbReference>
<dbReference type="GO" id="GO:0050567">
    <property type="term" value="F:glutaminyl-tRNA synthase (glutamine-hydrolyzing) activity"/>
    <property type="evidence" value="ECO:0007669"/>
    <property type="project" value="UniProtKB-UniRule"/>
</dbReference>
<dbReference type="GO" id="GO:0070681">
    <property type="term" value="P:glutaminyl-tRNAGln biosynthesis via transamidation"/>
    <property type="evidence" value="ECO:0007669"/>
    <property type="project" value="TreeGrafter"/>
</dbReference>
<dbReference type="GO" id="GO:0006412">
    <property type="term" value="P:translation"/>
    <property type="evidence" value="ECO:0007669"/>
    <property type="project" value="UniProtKB-UniRule"/>
</dbReference>
<dbReference type="FunFam" id="1.10.10.410:FF:000001">
    <property type="entry name" value="Aspartyl/glutamyl-tRNA(Asn/Gln) amidotransferase subunit B"/>
    <property type="match status" value="1"/>
</dbReference>
<dbReference type="FunFam" id="1.10.150.380:FF:000001">
    <property type="entry name" value="Aspartyl/glutamyl-tRNA(Asn/Gln) amidotransferase subunit B"/>
    <property type="match status" value="1"/>
</dbReference>
<dbReference type="Gene3D" id="1.10.10.410">
    <property type="match status" value="1"/>
</dbReference>
<dbReference type="Gene3D" id="1.10.150.380">
    <property type="entry name" value="GatB domain, N-terminal subdomain"/>
    <property type="match status" value="1"/>
</dbReference>
<dbReference type="HAMAP" id="MF_00121">
    <property type="entry name" value="GatB"/>
    <property type="match status" value="1"/>
</dbReference>
<dbReference type="InterPro" id="IPR017959">
    <property type="entry name" value="Asn/Gln-tRNA_amidoTrfase_suB/E"/>
</dbReference>
<dbReference type="InterPro" id="IPR006075">
    <property type="entry name" value="Asn/Gln-tRNA_Trfase_suB/E_cat"/>
</dbReference>
<dbReference type="InterPro" id="IPR018027">
    <property type="entry name" value="Asn/Gln_amidotransferase"/>
</dbReference>
<dbReference type="InterPro" id="IPR003789">
    <property type="entry name" value="Asn/Gln_tRNA_amidoTrase-B-like"/>
</dbReference>
<dbReference type="InterPro" id="IPR004413">
    <property type="entry name" value="GatB"/>
</dbReference>
<dbReference type="InterPro" id="IPR042114">
    <property type="entry name" value="GatB_C_1"/>
</dbReference>
<dbReference type="InterPro" id="IPR023168">
    <property type="entry name" value="GatB_Yqey_C_2"/>
</dbReference>
<dbReference type="InterPro" id="IPR017958">
    <property type="entry name" value="Gln-tRNA_amidoTrfase_suB_CS"/>
</dbReference>
<dbReference type="InterPro" id="IPR014746">
    <property type="entry name" value="Gln_synth/guanido_kin_cat_dom"/>
</dbReference>
<dbReference type="NCBIfam" id="TIGR00133">
    <property type="entry name" value="gatB"/>
    <property type="match status" value="1"/>
</dbReference>
<dbReference type="NCBIfam" id="NF004012">
    <property type="entry name" value="PRK05477.1-2"/>
    <property type="match status" value="1"/>
</dbReference>
<dbReference type="NCBIfam" id="NF004014">
    <property type="entry name" value="PRK05477.1-4"/>
    <property type="match status" value="1"/>
</dbReference>
<dbReference type="NCBIfam" id="NF004015">
    <property type="entry name" value="PRK05477.1-5"/>
    <property type="match status" value="1"/>
</dbReference>
<dbReference type="PANTHER" id="PTHR11659">
    <property type="entry name" value="GLUTAMYL-TRNA GLN AMIDOTRANSFERASE SUBUNIT B MITOCHONDRIAL AND PROKARYOTIC PET112-RELATED"/>
    <property type="match status" value="1"/>
</dbReference>
<dbReference type="PANTHER" id="PTHR11659:SF0">
    <property type="entry name" value="GLUTAMYL-TRNA(GLN) AMIDOTRANSFERASE SUBUNIT B, MITOCHONDRIAL"/>
    <property type="match status" value="1"/>
</dbReference>
<dbReference type="Pfam" id="PF02934">
    <property type="entry name" value="GatB_N"/>
    <property type="match status" value="1"/>
</dbReference>
<dbReference type="Pfam" id="PF02637">
    <property type="entry name" value="GatB_Yqey"/>
    <property type="match status" value="1"/>
</dbReference>
<dbReference type="SMART" id="SM00845">
    <property type="entry name" value="GatB_Yqey"/>
    <property type="match status" value="1"/>
</dbReference>
<dbReference type="SUPFAM" id="SSF89095">
    <property type="entry name" value="GatB/YqeY motif"/>
    <property type="match status" value="1"/>
</dbReference>
<dbReference type="SUPFAM" id="SSF55931">
    <property type="entry name" value="Glutamine synthetase/guanido kinase"/>
    <property type="match status" value="1"/>
</dbReference>
<dbReference type="PROSITE" id="PS01234">
    <property type="entry name" value="GATB"/>
    <property type="match status" value="1"/>
</dbReference>
<comment type="function">
    <text evidence="1">Allows the formation of correctly charged Asn-tRNA(Asn) or Gln-tRNA(Gln) through the transamidation of misacylated Asp-tRNA(Asn) or Glu-tRNA(Gln) in organisms which lack either or both of asparaginyl-tRNA or glutaminyl-tRNA synthetases. The reaction takes place in the presence of glutamine and ATP through an activated phospho-Asp-tRNA(Asn) or phospho-Glu-tRNA(Gln).</text>
</comment>
<comment type="catalytic activity">
    <reaction evidence="1">
        <text>L-glutamyl-tRNA(Gln) + L-glutamine + ATP + H2O = L-glutaminyl-tRNA(Gln) + L-glutamate + ADP + phosphate + H(+)</text>
        <dbReference type="Rhea" id="RHEA:17521"/>
        <dbReference type="Rhea" id="RHEA-COMP:9681"/>
        <dbReference type="Rhea" id="RHEA-COMP:9684"/>
        <dbReference type="ChEBI" id="CHEBI:15377"/>
        <dbReference type="ChEBI" id="CHEBI:15378"/>
        <dbReference type="ChEBI" id="CHEBI:29985"/>
        <dbReference type="ChEBI" id="CHEBI:30616"/>
        <dbReference type="ChEBI" id="CHEBI:43474"/>
        <dbReference type="ChEBI" id="CHEBI:58359"/>
        <dbReference type="ChEBI" id="CHEBI:78520"/>
        <dbReference type="ChEBI" id="CHEBI:78521"/>
        <dbReference type="ChEBI" id="CHEBI:456216"/>
    </reaction>
</comment>
<comment type="catalytic activity">
    <reaction evidence="1">
        <text>L-aspartyl-tRNA(Asn) + L-glutamine + ATP + H2O = L-asparaginyl-tRNA(Asn) + L-glutamate + ADP + phosphate + 2 H(+)</text>
        <dbReference type="Rhea" id="RHEA:14513"/>
        <dbReference type="Rhea" id="RHEA-COMP:9674"/>
        <dbReference type="Rhea" id="RHEA-COMP:9677"/>
        <dbReference type="ChEBI" id="CHEBI:15377"/>
        <dbReference type="ChEBI" id="CHEBI:15378"/>
        <dbReference type="ChEBI" id="CHEBI:29985"/>
        <dbReference type="ChEBI" id="CHEBI:30616"/>
        <dbReference type="ChEBI" id="CHEBI:43474"/>
        <dbReference type="ChEBI" id="CHEBI:58359"/>
        <dbReference type="ChEBI" id="CHEBI:78515"/>
        <dbReference type="ChEBI" id="CHEBI:78516"/>
        <dbReference type="ChEBI" id="CHEBI:456216"/>
    </reaction>
</comment>
<comment type="subunit">
    <text evidence="1">Heterotrimer of A, B and C subunits.</text>
</comment>
<comment type="similarity">
    <text evidence="1">Belongs to the GatB/GatE family. GatB subfamily.</text>
</comment>
<gene>
    <name evidence="1" type="primary">gatB</name>
    <name type="ordered locus">Bphy_0055</name>
</gene>
<sequence>MATQWEVVIGLETHAQLSTVSKIFSGAATQFGAAPNTQACPVDLALPGVLPVMNKGAVERAIQFGLAIDATIAPRSIFARKNYFYPDLPKGYQISQYEIPVVQGGQITIQVPANEKAGKEAYEKTINLTRAHLEEDAGKSLHEDFAGMTGIDLNRAGTPLLEIVTEPEMRSAAEAVAYAKALHGLVVWLGICDGNMQEGSFRCDANVSVRPVGQKEFGTRAEIKNLNSFRFLEEAIQYEVRRQIELIEDGGTVVQETRLYDPDKRETRSMRSKEDAHDYRYFPDPDLMPLVIDASWVERVKGELPELPAAMQKRFVDQYGLTPYDAGVVTAGKAMAAYYEAVVAKVGAAQAKVAANWLMGEVSSQLNREGLDIADSPVSAAQLALVLQRIADGTISNKIAKEIFLAIWEEKATDEAAADRIIEAKGLKQISDTGALEAIIDEVLAANQKSVEEFRAGKEKAFNALIGQAMKATKGKANPQQVNELLKKKLG</sequence>
<proteinExistence type="inferred from homology"/>
<reference key="1">
    <citation type="journal article" date="2014" name="Stand. Genomic Sci.">
        <title>Complete genome sequence of Burkholderia phymatum STM815(T), a broad host range and efficient nitrogen-fixing symbiont of Mimosa species.</title>
        <authorList>
            <person name="Moulin L."/>
            <person name="Klonowska A."/>
            <person name="Caroline B."/>
            <person name="Booth K."/>
            <person name="Vriezen J.A."/>
            <person name="Melkonian R."/>
            <person name="James E.K."/>
            <person name="Young J.P."/>
            <person name="Bena G."/>
            <person name="Hauser L."/>
            <person name="Land M."/>
            <person name="Kyrpides N."/>
            <person name="Bruce D."/>
            <person name="Chain P."/>
            <person name="Copeland A."/>
            <person name="Pitluck S."/>
            <person name="Woyke T."/>
            <person name="Lizotte-Waniewski M."/>
            <person name="Bristow J."/>
            <person name="Riley M."/>
        </authorList>
    </citation>
    <scope>NUCLEOTIDE SEQUENCE [LARGE SCALE GENOMIC DNA]</scope>
    <source>
        <strain>DSM 17167 / CIP 108236 / LMG 21445 / STM815</strain>
    </source>
</reference>
<evidence type="ECO:0000255" key="1">
    <source>
        <dbReference type="HAMAP-Rule" id="MF_00121"/>
    </source>
</evidence>
<feature type="chain" id="PRO_1000095193" description="Aspartyl/glutamyl-tRNA(Asn/Gln) amidotransferase subunit B">
    <location>
        <begin position="1"/>
        <end position="491"/>
    </location>
</feature>
<keyword id="KW-0067">ATP-binding</keyword>
<keyword id="KW-0436">Ligase</keyword>
<keyword id="KW-0547">Nucleotide-binding</keyword>
<keyword id="KW-0648">Protein biosynthesis</keyword>
<keyword id="KW-1185">Reference proteome</keyword>
<organism>
    <name type="scientific">Paraburkholderia phymatum (strain DSM 17167 / CIP 108236 / LMG 21445 / STM815)</name>
    <name type="common">Burkholderia phymatum</name>
    <dbReference type="NCBI Taxonomy" id="391038"/>
    <lineage>
        <taxon>Bacteria</taxon>
        <taxon>Pseudomonadati</taxon>
        <taxon>Pseudomonadota</taxon>
        <taxon>Betaproteobacteria</taxon>
        <taxon>Burkholderiales</taxon>
        <taxon>Burkholderiaceae</taxon>
        <taxon>Paraburkholderia</taxon>
    </lineage>
</organism>
<protein>
    <recommendedName>
        <fullName evidence="1">Aspartyl/glutamyl-tRNA(Asn/Gln) amidotransferase subunit B</fullName>
        <shortName evidence="1">Asp/Glu-ADT subunit B</shortName>
        <ecNumber evidence="1">6.3.5.-</ecNumber>
    </recommendedName>
</protein>
<accession>B2JJW3</accession>
<name>GATB_PARP8</name>